<organism>
    <name type="scientific">Chlorobaculum tepidum (strain ATCC 49652 / DSM 12025 / NBRC 103806 / TLS)</name>
    <name type="common">Chlorobium tepidum</name>
    <dbReference type="NCBI Taxonomy" id="194439"/>
    <lineage>
        <taxon>Bacteria</taxon>
        <taxon>Pseudomonadati</taxon>
        <taxon>Chlorobiota</taxon>
        <taxon>Chlorobiia</taxon>
        <taxon>Chlorobiales</taxon>
        <taxon>Chlorobiaceae</taxon>
        <taxon>Chlorobaculum</taxon>
    </lineage>
</organism>
<name>RS2_CHLTE</name>
<accession>Q8KBK6</accession>
<feature type="chain" id="PRO_0000134153" description="Small ribosomal subunit protein uS2">
    <location>
        <begin position="1"/>
        <end position="249"/>
    </location>
</feature>
<evidence type="ECO:0000255" key="1">
    <source>
        <dbReference type="HAMAP-Rule" id="MF_00291"/>
    </source>
</evidence>
<evidence type="ECO:0000305" key="2"/>
<proteinExistence type="inferred from homology"/>
<dbReference type="EMBL" id="AE006470">
    <property type="protein sequence ID" value="AAM73002.1"/>
    <property type="molecule type" value="Genomic_DNA"/>
</dbReference>
<dbReference type="RefSeq" id="NP_662660.1">
    <property type="nucleotide sequence ID" value="NC_002932.3"/>
</dbReference>
<dbReference type="RefSeq" id="WP_010933441.1">
    <property type="nucleotide sequence ID" value="NC_002932.3"/>
</dbReference>
<dbReference type="SMR" id="Q8KBK6"/>
<dbReference type="STRING" id="194439.CT1781"/>
<dbReference type="EnsemblBacteria" id="AAM73002">
    <property type="protein sequence ID" value="AAM73002"/>
    <property type="gene ID" value="CT1781"/>
</dbReference>
<dbReference type="KEGG" id="cte:CT1781"/>
<dbReference type="PATRIC" id="fig|194439.7.peg.1615"/>
<dbReference type="eggNOG" id="COG0052">
    <property type="taxonomic scope" value="Bacteria"/>
</dbReference>
<dbReference type="HOGENOM" id="CLU_040318_0_2_10"/>
<dbReference type="OrthoDB" id="9808036at2"/>
<dbReference type="Proteomes" id="UP000001007">
    <property type="component" value="Chromosome"/>
</dbReference>
<dbReference type="GO" id="GO:0022627">
    <property type="term" value="C:cytosolic small ribosomal subunit"/>
    <property type="evidence" value="ECO:0007669"/>
    <property type="project" value="TreeGrafter"/>
</dbReference>
<dbReference type="GO" id="GO:0003735">
    <property type="term" value="F:structural constituent of ribosome"/>
    <property type="evidence" value="ECO:0007669"/>
    <property type="project" value="InterPro"/>
</dbReference>
<dbReference type="GO" id="GO:0006412">
    <property type="term" value="P:translation"/>
    <property type="evidence" value="ECO:0007669"/>
    <property type="project" value="UniProtKB-UniRule"/>
</dbReference>
<dbReference type="CDD" id="cd01425">
    <property type="entry name" value="RPS2"/>
    <property type="match status" value="1"/>
</dbReference>
<dbReference type="FunFam" id="1.10.287.610:FF:000001">
    <property type="entry name" value="30S ribosomal protein S2"/>
    <property type="match status" value="1"/>
</dbReference>
<dbReference type="Gene3D" id="3.40.50.10490">
    <property type="entry name" value="Glucose-6-phosphate isomerase like protein, domain 1"/>
    <property type="match status" value="1"/>
</dbReference>
<dbReference type="Gene3D" id="1.10.287.610">
    <property type="entry name" value="Helix hairpin bin"/>
    <property type="match status" value="1"/>
</dbReference>
<dbReference type="HAMAP" id="MF_00291_B">
    <property type="entry name" value="Ribosomal_uS2_B"/>
    <property type="match status" value="1"/>
</dbReference>
<dbReference type="InterPro" id="IPR001865">
    <property type="entry name" value="Ribosomal_uS2"/>
</dbReference>
<dbReference type="InterPro" id="IPR005706">
    <property type="entry name" value="Ribosomal_uS2_bac/mit/plastid"/>
</dbReference>
<dbReference type="InterPro" id="IPR018130">
    <property type="entry name" value="Ribosomal_uS2_CS"/>
</dbReference>
<dbReference type="InterPro" id="IPR023591">
    <property type="entry name" value="Ribosomal_uS2_flav_dom_sf"/>
</dbReference>
<dbReference type="NCBIfam" id="TIGR01011">
    <property type="entry name" value="rpsB_bact"/>
    <property type="match status" value="1"/>
</dbReference>
<dbReference type="PANTHER" id="PTHR12534">
    <property type="entry name" value="30S RIBOSOMAL PROTEIN S2 PROKARYOTIC AND ORGANELLAR"/>
    <property type="match status" value="1"/>
</dbReference>
<dbReference type="PANTHER" id="PTHR12534:SF0">
    <property type="entry name" value="SMALL RIBOSOMAL SUBUNIT PROTEIN US2M"/>
    <property type="match status" value="1"/>
</dbReference>
<dbReference type="Pfam" id="PF00318">
    <property type="entry name" value="Ribosomal_S2"/>
    <property type="match status" value="1"/>
</dbReference>
<dbReference type="PRINTS" id="PR00395">
    <property type="entry name" value="RIBOSOMALS2"/>
</dbReference>
<dbReference type="SUPFAM" id="SSF52313">
    <property type="entry name" value="Ribosomal protein S2"/>
    <property type="match status" value="1"/>
</dbReference>
<dbReference type="PROSITE" id="PS00962">
    <property type="entry name" value="RIBOSOMAL_S2_1"/>
    <property type="match status" value="1"/>
</dbReference>
<dbReference type="PROSITE" id="PS00963">
    <property type="entry name" value="RIBOSOMAL_S2_2"/>
    <property type="match status" value="1"/>
</dbReference>
<comment type="similarity">
    <text evidence="1">Belongs to the universal ribosomal protein uS2 family.</text>
</comment>
<protein>
    <recommendedName>
        <fullName evidence="1">Small ribosomal subunit protein uS2</fullName>
    </recommendedName>
    <alternativeName>
        <fullName evidence="2">30S ribosomal protein S2</fullName>
    </alternativeName>
</protein>
<gene>
    <name evidence="1" type="primary">rpsB</name>
    <name type="ordered locus">CT1781</name>
</gene>
<reference key="1">
    <citation type="journal article" date="2002" name="Proc. Natl. Acad. Sci. U.S.A.">
        <title>The complete genome sequence of Chlorobium tepidum TLS, a photosynthetic, anaerobic, green-sulfur bacterium.</title>
        <authorList>
            <person name="Eisen J.A."/>
            <person name="Nelson K.E."/>
            <person name="Paulsen I.T."/>
            <person name="Heidelberg J.F."/>
            <person name="Wu M."/>
            <person name="Dodson R.J."/>
            <person name="DeBoy R.T."/>
            <person name="Gwinn M.L."/>
            <person name="Nelson W.C."/>
            <person name="Haft D.H."/>
            <person name="Hickey E.K."/>
            <person name="Peterson J.D."/>
            <person name="Durkin A.S."/>
            <person name="Kolonay J.F."/>
            <person name="Yang F."/>
            <person name="Holt I.E."/>
            <person name="Umayam L.A."/>
            <person name="Mason T.M."/>
            <person name="Brenner M."/>
            <person name="Shea T.P."/>
            <person name="Parksey D.S."/>
            <person name="Nierman W.C."/>
            <person name="Feldblyum T.V."/>
            <person name="Hansen C.L."/>
            <person name="Craven M.B."/>
            <person name="Radune D."/>
            <person name="Vamathevan J.J."/>
            <person name="Khouri H.M."/>
            <person name="White O."/>
            <person name="Gruber T.M."/>
            <person name="Ketchum K.A."/>
            <person name="Venter J.C."/>
            <person name="Tettelin H."/>
            <person name="Bryant D.A."/>
            <person name="Fraser C.M."/>
        </authorList>
    </citation>
    <scope>NUCLEOTIDE SEQUENCE [LARGE SCALE GENOMIC DNA]</scope>
    <source>
        <strain>ATCC 49652 / DSM 12025 / NBRC 103806 / TLS</strain>
    </source>
</reference>
<keyword id="KW-1185">Reference proteome</keyword>
<keyword id="KW-0687">Ribonucleoprotein</keyword>
<keyword id="KW-0689">Ribosomal protein</keyword>
<sequence length="249" mass="28158">MPTKFQLEEMLRAGVHFGHLARRWNPKMKPYIFMEKNGVHIIDLKKTLVMAEEALKAIEAIASTGREIMLVGTKKQAKVIIAEQAERAGMPYVCERWLGGMLTNFSTIRQSIRRMNAIERMETDGTFDMITKKERLMLIREKDKLVRILGGIANMNRLPAALFVVDIKKEHIAVKEARSLGIPIFAMVDTNCDPDEVDYVIPANDDAIRSIDLMVKAVADTILEARTLQVEQEVLAEMDEAAEEETAND</sequence>